<sequence length="83" mass="9058">MGSTKTLVTCFLVIILAVSLPNNNVLASDARIEGFSFDNCNIRCSEDYWNDECNKDCLRAGFQKGGQCGSPCIPCPVKCCCQK</sequence>
<gene>
    <name type="ordered locus">At3g16895</name>
    <name type="ORF">K14A17</name>
</gene>
<proteinExistence type="inferred from homology"/>
<reference key="1">
    <citation type="journal article" date="2000" name="DNA Res.">
        <title>Structural analysis of Arabidopsis thaliana chromosome 3. I. Sequence features of the regions of 4,504,864 bp covered by sixty P1 and TAC clones.</title>
        <authorList>
            <person name="Sato S."/>
            <person name="Nakamura Y."/>
            <person name="Kaneko T."/>
            <person name="Katoh T."/>
            <person name="Asamizu E."/>
            <person name="Tabata S."/>
        </authorList>
    </citation>
    <scope>NUCLEOTIDE SEQUENCE [LARGE SCALE GENOMIC DNA]</scope>
    <source>
        <strain>cv. Columbia</strain>
    </source>
</reference>
<reference key="2">
    <citation type="journal article" date="2017" name="Plant J.">
        <title>Araport11: a complete reannotation of the Arabidopsis thaliana reference genome.</title>
        <authorList>
            <person name="Cheng C.Y."/>
            <person name="Krishnakumar V."/>
            <person name="Chan A.P."/>
            <person name="Thibaud-Nissen F."/>
            <person name="Schobel S."/>
            <person name="Town C.D."/>
        </authorList>
    </citation>
    <scope>GENOME REANNOTATION</scope>
    <source>
        <strain>cv. Columbia</strain>
    </source>
</reference>
<reference key="3">
    <citation type="journal article" date="2004" name="Genome Res.">
        <title>Whole genome sequence comparisons and 'full-length' cDNA sequences: a combined approach to evaluate and improve Arabidopsis genome annotation.</title>
        <authorList>
            <person name="Castelli V."/>
            <person name="Aury J.-M."/>
            <person name="Jaillon O."/>
            <person name="Wincker P."/>
            <person name="Clepet C."/>
            <person name="Menard M."/>
            <person name="Cruaud C."/>
            <person name="Quetier F."/>
            <person name="Scarpelli C."/>
            <person name="Schaechter V."/>
            <person name="Temple G."/>
            <person name="Caboche M."/>
            <person name="Weissenbach J."/>
            <person name="Salanoubat M."/>
        </authorList>
    </citation>
    <scope>NUCLEOTIDE SEQUENCE [LARGE SCALE MRNA]</scope>
    <source>
        <strain>cv. Columbia</strain>
    </source>
</reference>
<reference key="4">
    <citation type="journal article" date="2005" name="Plant Physiol.">
        <title>Genome organization of more than 300 defensin-like genes in Arabidopsis.</title>
        <authorList>
            <person name="Silverstein K.A.T."/>
            <person name="Graham M.A."/>
            <person name="Paape T.D."/>
            <person name="VandenBosch K.A."/>
        </authorList>
    </citation>
    <scope>GENE FAMILY</scope>
</reference>
<feature type="signal peptide" evidence="2">
    <location>
        <begin position="1"/>
        <end position="27"/>
    </location>
</feature>
<feature type="chain" id="PRO_0000379629" description="Defensin-like protein 47">
    <location>
        <begin position="28"/>
        <end position="83"/>
    </location>
</feature>
<feature type="disulfide bond" evidence="1">
    <location>
        <begin position="40"/>
        <end position="81"/>
    </location>
</feature>
<feature type="disulfide bond" evidence="1">
    <location>
        <begin position="44"/>
        <end position="68"/>
    </location>
</feature>
<feature type="disulfide bond" evidence="1">
    <location>
        <begin position="53"/>
        <end position="79"/>
    </location>
</feature>
<feature type="disulfide bond" evidence="1">
    <location>
        <begin position="57"/>
        <end position="80"/>
    </location>
</feature>
<feature type="sequence conflict" description="In Ref. 3; BX822515." evidence="3" ref="3">
    <original>L</original>
    <variation>F</variation>
    <location>
        <position position="58"/>
    </location>
</feature>
<comment type="subcellular location">
    <subcellularLocation>
        <location evidence="1">Secreted</location>
    </subcellularLocation>
</comment>
<comment type="similarity">
    <text evidence="3">Belongs to the DEFL family.</text>
</comment>
<accession>Q3E7C7</accession>
<evidence type="ECO:0000250" key="1"/>
<evidence type="ECO:0000255" key="2"/>
<evidence type="ECO:0000305" key="3"/>
<dbReference type="EMBL" id="AB026636">
    <property type="status" value="NOT_ANNOTATED_CDS"/>
    <property type="molecule type" value="Genomic_DNA"/>
</dbReference>
<dbReference type="EMBL" id="CP002686">
    <property type="protein sequence ID" value="AEE75881.1"/>
    <property type="molecule type" value="Genomic_DNA"/>
</dbReference>
<dbReference type="EMBL" id="BX822515">
    <property type="status" value="NOT_ANNOTATED_CDS"/>
    <property type="molecule type" value="mRNA"/>
</dbReference>
<dbReference type="RefSeq" id="NP_974325.1">
    <property type="nucleotide sequence ID" value="NM_202596.1"/>
</dbReference>
<dbReference type="SMR" id="Q3E7C7"/>
<dbReference type="FunCoup" id="Q3E7C7">
    <property type="interactions" value="10"/>
</dbReference>
<dbReference type="PaxDb" id="3702-AT3G16895.1"/>
<dbReference type="ProteomicsDB" id="224076"/>
<dbReference type="EnsemblPlants" id="AT3G16895.1">
    <property type="protein sequence ID" value="AT3G16895.1"/>
    <property type="gene ID" value="AT3G16895"/>
</dbReference>
<dbReference type="GeneID" id="2745886"/>
<dbReference type="Gramene" id="AT3G16895.1">
    <property type="protein sequence ID" value="AT3G16895.1"/>
    <property type="gene ID" value="AT3G16895"/>
</dbReference>
<dbReference type="KEGG" id="ath:AT3G16895"/>
<dbReference type="Araport" id="AT3G16895"/>
<dbReference type="TAIR" id="AT3G16895"/>
<dbReference type="HOGENOM" id="CLU_165205_1_0_1"/>
<dbReference type="InParanoid" id="Q3E7C7"/>
<dbReference type="OMA" id="CPVKCCC"/>
<dbReference type="OrthoDB" id="1020991at2759"/>
<dbReference type="PhylomeDB" id="Q3E7C7"/>
<dbReference type="PRO" id="PR:Q3E7C7"/>
<dbReference type="Proteomes" id="UP000006548">
    <property type="component" value="Chromosome 3"/>
</dbReference>
<dbReference type="ExpressionAtlas" id="Q3E7C7">
    <property type="expression patterns" value="baseline and differential"/>
</dbReference>
<dbReference type="GO" id="GO:0005576">
    <property type="term" value="C:extracellular region"/>
    <property type="evidence" value="ECO:0007669"/>
    <property type="project" value="UniProtKB-SubCell"/>
</dbReference>
<dbReference type="GO" id="GO:0050832">
    <property type="term" value="P:defense response to fungus"/>
    <property type="evidence" value="ECO:0007669"/>
    <property type="project" value="UniProtKB-KW"/>
</dbReference>
<dbReference type="GO" id="GO:0031640">
    <property type="term" value="P:killing of cells of another organism"/>
    <property type="evidence" value="ECO:0007669"/>
    <property type="project" value="UniProtKB-KW"/>
</dbReference>
<dbReference type="InterPro" id="IPR056373">
    <property type="entry name" value="Defensin-like_dom"/>
</dbReference>
<dbReference type="Pfam" id="PF24552">
    <property type="entry name" value="Defensin"/>
    <property type="match status" value="1"/>
</dbReference>
<protein>
    <recommendedName>
        <fullName>Defensin-like protein 47</fullName>
    </recommendedName>
</protein>
<name>DEF47_ARATH</name>
<organism>
    <name type="scientific">Arabidopsis thaliana</name>
    <name type="common">Mouse-ear cress</name>
    <dbReference type="NCBI Taxonomy" id="3702"/>
    <lineage>
        <taxon>Eukaryota</taxon>
        <taxon>Viridiplantae</taxon>
        <taxon>Streptophyta</taxon>
        <taxon>Embryophyta</taxon>
        <taxon>Tracheophyta</taxon>
        <taxon>Spermatophyta</taxon>
        <taxon>Magnoliopsida</taxon>
        <taxon>eudicotyledons</taxon>
        <taxon>Gunneridae</taxon>
        <taxon>Pentapetalae</taxon>
        <taxon>rosids</taxon>
        <taxon>malvids</taxon>
        <taxon>Brassicales</taxon>
        <taxon>Brassicaceae</taxon>
        <taxon>Camelineae</taxon>
        <taxon>Arabidopsis</taxon>
    </lineage>
</organism>
<keyword id="KW-0929">Antimicrobial</keyword>
<keyword id="KW-1015">Disulfide bond</keyword>
<keyword id="KW-0295">Fungicide</keyword>
<keyword id="KW-0611">Plant defense</keyword>
<keyword id="KW-1185">Reference proteome</keyword>
<keyword id="KW-0964">Secreted</keyword>
<keyword id="KW-0732">Signal</keyword>